<dbReference type="EMBL" id="U58085">
    <property type="protein sequence ID" value="AAC47122.1"/>
    <property type="molecule type" value="mRNA"/>
</dbReference>
<dbReference type="EMBL" id="BX284605">
    <property type="protein sequence ID" value="CCD74336.1"/>
    <property type="molecule type" value="Genomic_DNA"/>
</dbReference>
<dbReference type="RefSeq" id="NP_503151.1">
    <property type="nucleotide sequence ID" value="NM_070750.8"/>
</dbReference>
<dbReference type="SMR" id="Q17391"/>
<dbReference type="BioGRID" id="43622">
    <property type="interactions" value="25"/>
</dbReference>
<dbReference type="FunCoup" id="Q17391">
    <property type="interactions" value="3421"/>
</dbReference>
<dbReference type="IntAct" id="Q17391">
    <property type="interactions" value="16"/>
</dbReference>
<dbReference type="MINT" id="Q17391"/>
<dbReference type="STRING" id="6239.Y108G3AL.1a.3"/>
<dbReference type="PaxDb" id="6239-Y108G3AL.1.2"/>
<dbReference type="PeptideAtlas" id="Q17391"/>
<dbReference type="EnsemblMetazoa" id="Y108G3AL.1a.1">
    <property type="protein sequence ID" value="Y108G3AL.1a.1"/>
    <property type="gene ID" value="WBGene00000838"/>
</dbReference>
<dbReference type="EnsemblMetazoa" id="Y108G3AL.1a.2">
    <property type="protein sequence ID" value="Y108G3AL.1a.2"/>
    <property type="gene ID" value="WBGene00000838"/>
</dbReference>
<dbReference type="GeneID" id="178547"/>
<dbReference type="KEGG" id="cel:CELE_Y108G3AL.1"/>
<dbReference type="UCSC" id="Y108G3AL.1.1">
    <property type="organism name" value="c. elegans"/>
</dbReference>
<dbReference type="AGR" id="WB:WBGene00000838"/>
<dbReference type="CTD" id="178547"/>
<dbReference type="WormBase" id="Y108G3AL.1a">
    <property type="protein sequence ID" value="CE27593"/>
    <property type="gene ID" value="WBGene00000838"/>
    <property type="gene designation" value="cul-3"/>
</dbReference>
<dbReference type="eggNOG" id="KOG2166">
    <property type="taxonomic scope" value="Eukaryota"/>
</dbReference>
<dbReference type="GeneTree" id="ENSGT00940000155066"/>
<dbReference type="HOGENOM" id="CLU_004747_7_1_1"/>
<dbReference type="InParanoid" id="Q17391"/>
<dbReference type="OMA" id="MFKDMTI"/>
<dbReference type="OrthoDB" id="27073at2759"/>
<dbReference type="PhylomeDB" id="Q17391"/>
<dbReference type="Reactome" id="R-CEL-4641258">
    <property type="pathway name" value="Degradation of DVL"/>
</dbReference>
<dbReference type="Reactome" id="R-CEL-5632684">
    <property type="pathway name" value="Hedgehog 'on' state"/>
</dbReference>
<dbReference type="Reactome" id="R-CEL-8951664">
    <property type="pathway name" value="Neddylation"/>
</dbReference>
<dbReference type="Reactome" id="R-CEL-9706019">
    <property type="pathway name" value="RHOBTB3 ATPase cycle"/>
</dbReference>
<dbReference type="Reactome" id="R-CEL-9755511">
    <property type="pathway name" value="KEAP1-NFE2L2 pathway"/>
</dbReference>
<dbReference type="Reactome" id="R-CEL-983168">
    <property type="pathway name" value="Antigen processing: Ubiquitination &amp; Proteasome degradation"/>
</dbReference>
<dbReference type="UniPathway" id="UPA00143"/>
<dbReference type="PRO" id="PR:Q17391"/>
<dbReference type="Proteomes" id="UP000001940">
    <property type="component" value="Chromosome V"/>
</dbReference>
<dbReference type="Bgee" id="WBGene00000838">
    <property type="expression patterns" value="Expressed in adult organism and 4 other cell types or tissues"/>
</dbReference>
<dbReference type="ExpressionAtlas" id="Q17391">
    <property type="expression patterns" value="baseline and differential"/>
</dbReference>
<dbReference type="GO" id="GO:0031463">
    <property type="term" value="C:Cul3-RING ubiquitin ligase complex"/>
    <property type="evidence" value="ECO:0000314"/>
    <property type="project" value="UniProtKB"/>
</dbReference>
<dbReference type="GO" id="GO:0005737">
    <property type="term" value="C:cytoplasm"/>
    <property type="evidence" value="ECO:0007669"/>
    <property type="project" value="UniProtKB-SubCell"/>
</dbReference>
<dbReference type="GO" id="GO:0005634">
    <property type="term" value="C:nucleus"/>
    <property type="evidence" value="ECO:0007669"/>
    <property type="project" value="UniProtKB-SubCell"/>
</dbReference>
<dbReference type="GO" id="GO:0031208">
    <property type="term" value="F:POZ domain binding"/>
    <property type="evidence" value="ECO:0000353"/>
    <property type="project" value="UniProtKB"/>
</dbReference>
<dbReference type="GO" id="GO:0031625">
    <property type="term" value="F:ubiquitin protein ligase binding"/>
    <property type="evidence" value="ECO:0000318"/>
    <property type="project" value="GO_Central"/>
</dbReference>
<dbReference type="GO" id="GO:0010623">
    <property type="term" value="P:programmed cell death involved in cell development"/>
    <property type="evidence" value="ECO:0000315"/>
    <property type="project" value="UniProtKB"/>
</dbReference>
<dbReference type="GO" id="GO:0030163">
    <property type="term" value="P:protein catabolic process"/>
    <property type="evidence" value="ECO:0000315"/>
    <property type="project" value="WormBase"/>
</dbReference>
<dbReference type="GO" id="GO:0000209">
    <property type="term" value="P:protein polyubiquitination"/>
    <property type="evidence" value="ECO:0000314"/>
    <property type="project" value="UniProtKB"/>
</dbReference>
<dbReference type="GO" id="GO:0016567">
    <property type="term" value="P:protein ubiquitination"/>
    <property type="evidence" value="ECO:0000318"/>
    <property type="project" value="GO_Central"/>
</dbReference>
<dbReference type="GO" id="GO:0071688">
    <property type="term" value="P:striated muscle myosin thick filament assembly"/>
    <property type="evidence" value="ECO:0000315"/>
    <property type="project" value="UniProtKB"/>
</dbReference>
<dbReference type="GO" id="GO:0006511">
    <property type="term" value="P:ubiquitin-dependent protein catabolic process"/>
    <property type="evidence" value="ECO:0007669"/>
    <property type="project" value="InterPro"/>
</dbReference>
<dbReference type="FunFam" id="1.10.10.10:FF:000091">
    <property type="entry name" value="Cullin 3"/>
    <property type="match status" value="1"/>
</dbReference>
<dbReference type="FunFam" id="1.20.1310.10:FF:000001">
    <property type="entry name" value="Cullin 3"/>
    <property type="match status" value="1"/>
</dbReference>
<dbReference type="FunFam" id="1.20.1310.10:FF:000006">
    <property type="entry name" value="Cullin 3"/>
    <property type="match status" value="1"/>
</dbReference>
<dbReference type="FunFam" id="1.20.1310.10:FF:000045">
    <property type="entry name" value="Cullin-3"/>
    <property type="match status" value="1"/>
</dbReference>
<dbReference type="FunFam" id="1.20.1310.10:FF:000053">
    <property type="entry name" value="Cullin-3"/>
    <property type="match status" value="1"/>
</dbReference>
<dbReference type="FunFam" id="3.30.230.130:FF:000017">
    <property type="entry name" value="Cullin-3"/>
    <property type="match status" value="1"/>
</dbReference>
<dbReference type="Gene3D" id="1.20.1310.10">
    <property type="entry name" value="Cullin Repeats"/>
    <property type="match status" value="4"/>
</dbReference>
<dbReference type="Gene3D" id="3.30.230.130">
    <property type="entry name" value="Cullin, Chain C, Domain 2"/>
    <property type="match status" value="1"/>
</dbReference>
<dbReference type="Gene3D" id="1.10.10.10">
    <property type="entry name" value="Winged helix-like DNA-binding domain superfamily/Winged helix DNA-binding domain"/>
    <property type="match status" value="1"/>
</dbReference>
<dbReference type="InterPro" id="IPR045093">
    <property type="entry name" value="Cullin"/>
</dbReference>
<dbReference type="InterPro" id="IPR016157">
    <property type="entry name" value="Cullin_CS"/>
</dbReference>
<dbReference type="InterPro" id="IPR016158">
    <property type="entry name" value="Cullin_homology"/>
</dbReference>
<dbReference type="InterPro" id="IPR036317">
    <property type="entry name" value="Cullin_homology_sf"/>
</dbReference>
<dbReference type="InterPro" id="IPR001373">
    <property type="entry name" value="Cullin_N"/>
</dbReference>
<dbReference type="InterPro" id="IPR019559">
    <property type="entry name" value="Cullin_neddylation_domain"/>
</dbReference>
<dbReference type="InterPro" id="IPR016159">
    <property type="entry name" value="Cullin_repeat-like_dom_sf"/>
</dbReference>
<dbReference type="InterPro" id="IPR036388">
    <property type="entry name" value="WH-like_DNA-bd_sf"/>
</dbReference>
<dbReference type="InterPro" id="IPR036390">
    <property type="entry name" value="WH_DNA-bd_sf"/>
</dbReference>
<dbReference type="PANTHER" id="PTHR11932">
    <property type="entry name" value="CULLIN"/>
    <property type="match status" value="1"/>
</dbReference>
<dbReference type="Pfam" id="PF00888">
    <property type="entry name" value="Cullin"/>
    <property type="match status" value="1"/>
</dbReference>
<dbReference type="Pfam" id="PF10557">
    <property type="entry name" value="Cullin_Nedd8"/>
    <property type="match status" value="1"/>
</dbReference>
<dbReference type="SMART" id="SM00182">
    <property type="entry name" value="CULLIN"/>
    <property type="match status" value="1"/>
</dbReference>
<dbReference type="SMART" id="SM00884">
    <property type="entry name" value="Cullin_Nedd8"/>
    <property type="match status" value="1"/>
</dbReference>
<dbReference type="SUPFAM" id="SSF75632">
    <property type="entry name" value="Cullin homology domain"/>
    <property type="match status" value="1"/>
</dbReference>
<dbReference type="SUPFAM" id="SSF74788">
    <property type="entry name" value="Cullin repeat-like"/>
    <property type="match status" value="1"/>
</dbReference>
<dbReference type="SUPFAM" id="SSF46785">
    <property type="entry name" value="Winged helix' DNA-binding domain"/>
    <property type="match status" value="1"/>
</dbReference>
<dbReference type="PROSITE" id="PS01256">
    <property type="entry name" value="CULLIN_1"/>
    <property type="match status" value="1"/>
</dbReference>
<dbReference type="PROSITE" id="PS50069">
    <property type="entry name" value="CULLIN_2"/>
    <property type="match status" value="1"/>
</dbReference>
<gene>
    <name evidence="12" type="primary">cul-3</name>
    <name evidence="12" type="ORF">Y108G3AL.1</name>
</gene>
<protein>
    <recommendedName>
        <fullName>Cullin-3</fullName>
        <shortName>CUL-3</shortName>
    </recommendedName>
</protein>
<reference key="1">
    <citation type="journal article" date="1996" name="Cell">
        <title>cul-1 is required for cell cycle exit in C. elegans and identifies a novel gene family.</title>
        <authorList>
            <person name="Kipreos E.T."/>
            <person name="Lander L.E."/>
            <person name="Wing J.P."/>
            <person name="He W.W."/>
            <person name="Hedgecock E.M."/>
        </authorList>
    </citation>
    <scope>NUCLEOTIDE SEQUENCE [MRNA]</scope>
    <source>
        <strain>Bristol N2</strain>
    </source>
</reference>
<reference key="2">
    <citation type="journal article" date="1998" name="Science">
        <title>Genome sequence of the nematode C. elegans: a platform for investigating biology.</title>
        <authorList>
            <consortium name="The C. elegans sequencing consortium"/>
        </authorList>
    </citation>
    <scope>NUCLEOTIDE SEQUENCE [LARGE SCALE GENOMIC DNA]</scope>
    <source>
        <strain>Bristol N2</strain>
    </source>
</reference>
<reference key="3">
    <citation type="journal article" date="2003" name="Curr. Biol.">
        <title>Neddylation and deneddylation of CUL-3 is required to target MEI-1/katanin for degradation at the meiosis-to-mitosis transition in C. elegans.</title>
        <authorList>
            <person name="Pintard L."/>
            <person name="Kurz T."/>
            <person name="Glaser S."/>
            <person name="Willis J.H."/>
            <person name="Peter M."/>
            <person name="Bowerman B."/>
        </authorList>
    </citation>
    <scope>FUNCTION</scope>
    <scope>NEDDYLATION</scope>
    <scope>DENEDDYLATION BY THE CSN COMPLEX</scope>
</reference>
<reference key="4">
    <citation type="journal article" date="2003" name="Nature">
        <title>BTB proteins are substrate-specific adaptors in an SCF-like modular ubiquitin ligase containing CUL-3.</title>
        <authorList>
            <person name="Xu L."/>
            <person name="Wei Y."/>
            <person name="Reboul J."/>
            <person name="Vaglio P."/>
            <person name="Shin T.H."/>
            <person name="Vidal M."/>
            <person name="Elledge S.J."/>
            <person name="Harper J.W."/>
        </authorList>
    </citation>
    <scope>FUNCTION</scope>
    <scope>INTERACTION WITH MEL-26; BATH-15; BATH-40; BATH-41; BATH-42; C17F4.8; TAG-303; D2045.8; F57C2.1; ZC239.15 AND B0281.5</scope>
</reference>
<reference key="5">
    <citation type="journal article" date="2005" name="Nature">
        <title>The conserved protein DCN-1/Dcn1p is required for cullin neddylation in C. elegans and S. cerevisiae.</title>
        <authorList>
            <person name="Kurz T."/>
            <person name="Oezlue N."/>
            <person name="Rudolf F."/>
            <person name="O'Rourke S.M."/>
            <person name="Luke B."/>
            <person name="Hofmann K."/>
            <person name="Hyman A.A."/>
            <person name="Bowerman B."/>
            <person name="Peter M."/>
        </authorList>
    </citation>
    <scope>INTERACTION WITH DCN-1</scope>
</reference>
<reference key="6">
    <citation type="journal article" date="2012" name="Mol. Biol. Cell">
        <title>UNC-89 (obscurin) binds to MEL-26, a BTB-domain protein, and affects the function of MEI-1 (katanin) in striated muscle of Caenorhabditis elegans.</title>
        <authorList>
            <person name="Wilson K.J."/>
            <person name="Qadota H."/>
            <person name="Mains P.E."/>
            <person name="Benian G.M."/>
        </authorList>
    </citation>
    <scope>FUNCTION</scope>
    <scope>INTERACTION WITH MEL-26</scope>
    <scope>DISRUPTION PHENOTYPE</scope>
</reference>
<reference key="7">
    <citation type="journal article" date="2021" name="Proc. Natl. Acad. Sci. U.S.A.">
        <title>The nuclear ubiquitin ligase adaptor SPOP is a conserved regulator of C9orf72 dipeptide toxicity.</title>
        <authorList>
            <person name="Snoznik C."/>
            <person name="Medvedeva V."/>
            <person name="Mojsilovic-Petrovic J."/>
            <person name="Rudich P."/>
            <person name="Oosten J."/>
            <person name="Kalb R.G."/>
            <person name="Lamitina T."/>
        </authorList>
    </citation>
    <scope>FUNCTION</scope>
    <scope>DISRUPTION PHENOTYPE</scope>
</reference>
<comment type="function">
    <text evidence="5 8 9 11">Probable core component of multiple cullin-RING-based BCB (BTB-CUL3-BTB) E3 ubiquitin-protein ligase complexes which mediate the ubiquitination and subsequent proteasomal degradation of target proteins (PubMed:13679922). Probably acts as a scaffold protein which may contribute to catalysis through positioning of the substrate and the ubiquitin-conjugating enzyme (PubMed:13679922). Required to target mei-3/katanin for degradation at the meiosis to mitosis transition via its neddylation and deneddylation (PubMed:12781129). Functions in ubiquitin-mediated degradation of CKIs to target cki-1 for degradation (PubMed:12781129). Regulates microtubule stability in the early embryo (PubMed:12781129). In body wall muscles, involved in the organization of myosin thick filaments, likely by regulating the degradation of microtubule severing protein mei-1 downstream of unc-89 (PubMed:22621901). Together with spop-1, may promote the ubiquitination and proteasomal degradation of target bromodomain-containing proteins such as bet-1 (PubMed:34593637).</text>
</comment>
<comment type="pathway">
    <text>Protein modification; protein ubiquitination.</text>
</comment>
<comment type="subunit">
    <text evidence="6 7 8">Probable component of multiple cullin-RING-based BCB (BTB-CUL3-BTB) E3 ubiquitin-protein ligase complexes formed by cul-3, rbx-1 and a variable BTB domain-containing protein acting as both, adapter to cullin and substrate recognition component (PubMed:13679922). Interacts with bath-15, bath-40, bath-41, bath-42, C17F4.8, tag-303, D2045.8, F57C2.1, ZC239.15 and B0281.5 (PubMed:13679922). Interacts with mel-26 (via BTB domain) (PubMed:13679922, PubMed:22621901). Interacts with dcn-1 (PubMed:13679922).</text>
</comment>
<comment type="interaction">
    <interactant intactId="EBI-593075">
        <id>Q17391</id>
    </interactant>
    <interactant intactId="EBI-313743">
        <id>Q9NF14</id>
        <label>bath-40</label>
    </interactant>
    <organismsDiffer>false</organismsDiffer>
    <experiments>2</experiments>
</comment>
<comment type="interaction">
    <interactant intactId="EBI-593075">
        <id>Q17391</id>
    </interactant>
    <interactant intactId="EBI-314147">
        <id>P41886</id>
        <label>bath-41</label>
    </interactant>
    <organismsDiffer>false</organismsDiffer>
    <experiments>2</experiments>
</comment>
<comment type="interaction">
    <interactant intactId="EBI-593075">
        <id>Q17391</id>
    </interactant>
    <interactant intactId="EBI-315422">
        <id>P34371</id>
        <label>bath-42</label>
    </interactant>
    <organismsDiffer>false</organismsDiffer>
    <experiments>3</experiments>
</comment>
<comment type="interaction">
    <interactant intactId="EBI-593075">
        <id>Q17391</id>
    </interactant>
    <interactant intactId="EBI-326132">
        <id>O16612</id>
        <label>CELE_B0281.5</label>
    </interactant>
    <organismsDiffer>false</organismsDiffer>
    <experiments>2</experiments>
</comment>
<comment type="interaction">
    <interactant intactId="EBI-593075">
        <id>Q17391</id>
    </interactant>
    <interactant intactId="EBI-326795">
        <id>Q18986</id>
        <label>CELE_D2045.8</label>
    </interactant>
    <organismsDiffer>false</organismsDiffer>
    <experiments>2</experiments>
</comment>
<comment type="interaction">
    <interactant intactId="EBI-593075">
        <id>Q17391</id>
    </interactant>
    <interactant intactId="EBI-312114">
        <id>Q18776</id>
        <label>inso-1</label>
    </interactant>
    <organismsDiffer>false</organismsDiffer>
    <experiments>3</experiments>
</comment>
<comment type="interaction">
    <interactant intactId="EBI-593075">
        <id>Q17391</id>
    </interactant>
    <interactant intactId="EBI-320790">
        <id>Q94420</id>
        <label>mel-26</label>
    </interactant>
    <organismsDiffer>false</organismsDiffer>
    <experiments>3</experiments>
</comment>
<comment type="subcellular location">
    <subcellularLocation>
        <location>Cytoplasm</location>
    </subcellularLocation>
    <subcellularLocation>
        <location>Nucleus</location>
    </subcellularLocation>
</comment>
<comment type="developmental stage">
    <text>Highest levels in embryos and lower levels in larvae and adults.</text>
</comment>
<comment type="PTM">
    <text evidence="5">Neddylated. Deneddylated via its interaction with the COP9 signalosome (CSN) complex.</text>
</comment>
<comment type="disruption phenotype">
    <text evidence="8 9">RNAi-mediated knockdown at L1 larval stage results in the disorganization of myosin thick filaments in adult body wall muscles characterized by the formation of abnormal myosin heavy chain myo-3 aggregates and V-shaped crossing of A-bands (PubMed:22621901). RNAi-mediated knockdown suppresses the age-dependent paralysis and growth arrest induced by exogenous dipeptide repeat protein PR50 (PubMed:34593637).</text>
</comment>
<comment type="similarity">
    <text evidence="3">Belongs to the cullin family.</text>
</comment>
<sequence>MSGRSGNGGQQKMRIRPFMATIDEQYVTQTWELLKRAIQEIQRKNNSGLSFEELYRNAYTMVLHKHGERLYNGLKDVIQDHMASVRIRIIESMNSGSFLETVAESWADHTVAMVMIRDILMYMDRIYVAQNNHVLPVYNLGLDAYRTEILRQNGIGDRIRDALLELIKLDRKSNQINWHGIKNACDMLISLGIDSRTVYEDEFERPLLKETSDYYRDVCKNWLSGDNDACFYLAQVEIAMHDEASRASRYLDKMTEAKILQVMDDVMVAEHIQTIVYMQNGGVKFMLEHKKIEDLTRIFRIFKRIGDSVTVPGGGLKALLKAVSEYLNETGSNIVKNEDLLKNPVNFVNELLQLKDYFSSLLTTAFADDRDFKNRFQHDFETFLNSNRQSPEFVALYMDDMLRSGLKCVSDAEMDNKLDNVMILFRYLQEKDVFEKYFKQYLAKRLLLDKSCSDDVEKALLAKLKTECGCQFTQKLENMFRDKELWLTLATSFRDWREAQPTKMSIDISLRVLTAGVWPTVQCNPVVLPQELSVAYEMFTQYYTEKHTGRKLTINTLLGNADVKATFYPPPKASMSNEENGPGPSSSGESMKERKPEHKILQVNTHQMIILLQFNHHNRISCQQLMDELKIPERELKRNLQSLALGKASQRILVRKNKGKDAIDMSDEFAVNDNFQSKLTRVKVQMVTGKVESEPEIRETRQKVEDDRKLEVEAAIVRIMKARKKLNHNNLVAEVTQQLRHRFMPSPIIIKQRIETLIEREYLARDEHDHRAYQYIA</sequence>
<proteinExistence type="evidence at protein level"/>
<organism>
    <name type="scientific">Caenorhabditis elegans</name>
    <dbReference type="NCBI Taxonomy" id="6239"/>
    <lineage>
        <taxon>Eukaryota</taxon>
        <taxon>Metazoa</taxon>
        <taxon>Ecdysozoa</taxon>
        <taxon>Nematoda</taxon>
        <taxon>Chromadorea</taxon>
        <taxon>Rhabditida</taxon>
        <taxon>Rhabditina</taxon>
        <taxon>Rhabditomorpha</taxon>
        <taxon>Rhabditoidea</taxon>
        <taxon>Rhabditidae</taxon>
        <taxon>Peloderinae</taxon>
        <taxon>Caenorhabditis</taxon>
    </lineage>
</organism>
<feature type="chain" id="PRO_0000119782" description="Cullin-3">
    <location>
        <begin position="1"/>
        <end position="777"/>
    </location>
</feature>
<feature type="domain" description="Cullin neddylation" evidence="2">
    <location>
        <begin position="707"/>
        <end position="769"/>
    </location>
</feature>
<feature type="region of interest" description="Disordered" evidence="4">
    <location>
        <begin position="568"/>
        <end position="596"/>
    </location>
</feature>
<feature type="compositionally biased region" description="Low complexity" evidence="4">
    <location>
        <begin position="576"/>
        <end position="589"/>
    </location>
</feature>
<feature type="cross-link" description="Glycyl lysine isopeptide (Lys-Gly) (interchain with G-Cter in NEDD8)" evidence="1">
    <location>
        <position position="721"/>
    </location>
</feature>
<feature type="sequence conflict" description="In Ref. 1; AAC47122." evidence="10" ref="1">
    <original>S</original>
    <variation>G</variation>
    <location>
        <position position="586"/>
    </location>
</feature>
<feature type="sequence conflict" description="In Ref. 1; AAC47122." evidence="10" ref="1">
    <original>F</original>
    <variation>L</variation>
    <location>
        <position position="614"/>
    </location>
</feature>
<feature type="sequence conflict" description="In Ref. 1; AAC47122." evidence="10" ref="1">
    <original>Q</original>
    <variation>QHEQ</variation>
    <location>
        <position position="623"/>
    </location>
</feature>
<accession>Q17391</accession>
<accession>Q95Y32</accession>
<keyword id="KW-0963">Cytoplasm</keyword>
<keyword id="KW-1017">Isopeptide bond</keyword>
<keyword id="KW-0539">Nucleus</keyword>
<keyword id="KW-1185">Reference proteome</keyword>
<keyword id="KW-0832">Ubl conjugation</keyword>
<keyword id="KW-0833">Ubl conjugation pathway</keyword>
<name>CUL3_CAEEL</name>
<evidence type="ECO:0000250" key="1">
    <source>
        <dbReference type="UniProtKB" id="Q13616"/>
    </source>
</evidence>
<evidence type="ECO:0000255" key="2"/>
<evidence type="ECO:0000255" key="3">
    <source>
        <dbReference type="PROSITE-ProRule" id="PRU00330"/>
    </source>
</evidence>
<evidence type="ECO:0000256" key="4">
    <source>
        <dbReference type="SAM" id="MobiDB-lite"/>
    </source>
</evidence>
<evidence type="ECO:0000269" key="5">
    <source>
    </source>
</evidence>
<evidence type="ECO:0000269" key="6">
    <source>
    </source>
</evidence>
<evidence type="ECO:0000269" key="7">
    <source>
    </source>
</evidence>
<evidence type="ECO:0000269" key="8">
    <source>
    </source>
</evidence>
<evidence type="ECO:0000269" key="9">
    <source>
    </source>
</evidence>
<evidence type="ECO:0000305" key="10"/>
<evidence type="ECO:0000305" key="11">
    <source>
    </source>
</evidence>
<evidence type="ECO:0000312" key="12">
    <source>
        <dbReference type="WormBase" id="Y108G3AL.1a"/>
    </source>
</evidence>